<gene>
    <name evidence="2" type="primary">nuoB</name>
    <name type="ordered locus">Jann_1170</name>
</gene>
<feature type="chain" id="PRO_0000358414" description="NADH-quinone oxidoreductase subunit B">
    <location>
        <begin position="1"/>
        <end position="177"/>
    </location>
</feature>
<feature type="binding site" evidence="2">
    <location>
        <position position="56"/>
    </location>
    <ligand>
        <name>[4Fe-4S] cluster</name>
        <dbReference type="ChEBI" id="CHEBI:49883"/>
    </ligand>
</feature>
<feature type="binding site" evidence="2">
    <location>
        <position position="57"/>
    </location>
    <ligand>
        <name>[4Fe-4S] cluster</name>
        <dbReference type="ChEBI" id="CHEBI:49883"/>
    </ligand>
</feature>
<feature type="binding site" evidence="2">
    <location>
        <position position="121"/>
    </location>
    <ligand>
        <name>[4Fe-4S] cluster</name>
        <dbReference type="ChEBI" id="CHEBI:49883"/>
    </ligand>
</feature>
<feature type="binding site" evidence="2">
    <location>
        <position position="151"/>
    </location>
    <ligand>
        <name>[4Fe-4S] cluster</name>
        <dbReference type="ChEBI" id="CHEBI:49883"/>
    </ligand>
</feature>
<keyword id="KW-0004">4Fe-4S</keyword>
<keyword id="KW-0997">Cell inner membrane</keyword>
<keyword id="KW-1003">Cell membrane</keyword>
<keyword id="KW-0408">Iron</keyword>
<keyword id="KW-0411">Iron-sulfur</keyword>
<keyword id="KW-0472">Membrane</keyword>
<keyword id="KW-0479">Metal-binding</keyword>
<keyword id="KW-0520">NAD</keyword>
<keyword id="KW-0874">Quinone</keyword>
<keyword id="KW-1185">Reference proteome</keyword>
<keyword id="KW-1278">Translocase</keyword>
<keyword id="KW-0813">Transport</keyword>
<keyword id="KW-0830">Ubiquinone</keyword>
<sequence>MSVATNPNHAGADREVGTQALNRELQDKGFLVTSSEDIINWARTGSLHWMTFGLACCAVEMMHTSMPRYDAERFGIAPRASPRQSDVMIVAGTLTNKMAPALRKVYDQMPEPRYVISMGSCANGGGYYHYSYSVVRGCDRIVPVDIYVPGCPPTAEALLYGILQLQRKIRRTGTIAR</sequence>
<protein>
    <recommendedName>
        <fullName evidence="2">NADH-quinone oxidoreductase subunit B</fullName>
        <ecNumber evidence="2">7.1.1.-</ecNumber>
    </recommendedName>
    <alternativeName>
        <fullName evidence="2">NADH dehydrogenase I subunit B</fullName>
    </alternativeName>
    <alternativeName>
        <fullName evidence="2">NDH-1 subunit B</fullName>
    </alternativeName>
</protein>
<evidence type="ECO:0000250" key="1"/>
<evidence type="ECO:0000255" key="2">
    <source>
        <dbReference type="HAMAP-Rule" id="MF_01356"/>
    </source>
</evidence>
<reference key="1">
    <citation type="submission" date="2006-02" db="EMBL/GenBank/DDBJ databases">
        <title>Complete sequence of chromosome of Jannaschia sp. CCS1.</title>
        <authorList>
            <consortium name="US DOE Joint Genome Institute"/>
            <person name="Copeland A."/>
            <person name="Lucas S."/>
            <person name="Lapidus A."/>
            <person name="Barry K."/>
            <person name="Detter J.C."/>
            <person name="Glavina del Rio T."/>
            <person name="Hammon N."/>
            <person name="Israni S."/>
            <person name="Pitluck S."/>
            <person name="Brettin T."/>
            <person name="Bruce D."/>
            <person name="Han C."/>
            <person name="Tapia R."/>
            <person name="Gilna P."/>
            <person name="Chertkov O."/>
            <person name="Saunders E."/>
            <person name="Schmutz J."/>
            <person name="Larimer F."/>
            <person name="Land M."/>
            <person name="Kyrpides N."/>
            <person name="Lykidis A."/>
            <person name="Moran M.A."/>
            <person name="Belas R."/>
            <person name="Ye W."/>
            <person name="Buchan A."/>
            <person name="Gonzalez J.M."/>
            <person name="Schell M.A."/>
            <person name="Richardson P."/>
        </authorList>
    </citation>
    <scope>NUCLEOTIDE SEQUENCE [LARGE SCALE GENOMIC DNA]</scope>
    <source>
        <strain>CCS1</strain>
    </source>
</reference>
<organism>
    <name type="scientific">Jannaschia sp. (strain CCS1)</name>
    <dbReference type="NCBI Taxonomy" id="290400"/>
    <lineage>
        <taxon>Bacteria</taxon>
        <taxon>Pseudomonadati</taxon>
        <taxon>Pseudomonadota</taxon>
        <taxon>Alphaproteobacteria</taxon>
        <taxon>Rhodobacterales</taxon>
        <taxon>Roseobacteraceae</taxon>
        <taxon>Jannaschia</taxon>
    </lineage>
</organism>
<dbReference type="EC" id="7.1.1.-" evidence="2"/>
<dbReference type="EMBL" id="CP000264">
    <property type="protein sequence ID" value="ABD54087.1"/>
    <property type="molecule type" value="Genomic_DNA"/>
</dbReference>
<dbReference type="RefSeq" id="WP_011454294.1">
    <property type="nucleotide sequence ID" value="NC_007802.1"/>
</dbReference>
<dbReference type="SMR" id="Q28T75"/>
<dbReference type="STRING" id="290400.Jann_1170"/>
<dbReference type="KEGG" id="jan:Jann_1170"/>
<dbReference type="eggNOG" id="COG0377">
    <property type="taxonomic scope" value="Bacteria"/>
</dbReference>
<dbReference type="HOGENOM" id="CLU_055737_7_0_5"/>
<dbReference type="OrthoDB" id="9786737at2"/>
<dbReference type="Proteomes" id="UP000008326">
    <property type="component" value="Chromosome"/>
</dbReference>
<dbReference type="GO" id="GO:0005886">
    <property type="term" value="C:plasma membrane"/>
    <property type="evidence" value="ECO:0007669"/>
    <property type="project" value="UniProtKB-SubCell"/>
</dbReference>
<dbReference type="GO" id="GO:0045271">
    <property type="term" value="C:respiratory chain complex I"/>
    <property type="evidence" value="ECO:0007669"/>
    <property type="project" value="TreeGrafter"/>
</dbReference>
<dbReference type="GO" id="GO:0051539">
    <property type="term" value="F:4 iron, 4 sulfur cluster binding"/>
    <property type="evidence" value="ECO:0007669"/>
    <property type="project" value="UniProtKB-KW"/>
</dbReference>
<dbReference type="GO" id="GO:0005506">
    <property type="term" value="F:iron ion binding"/>
    <property type="evidence" value="ECO:0007669"/>
    <property type="project" value="UniProtKB-UniRule"/>
</dbReference>
<dbReference type="GO" id="GO:0008137">
    <property type="term" value="F:NADH dehydrogenase (ubiquinone) activity"/>
    <property type="evidence" value="ECO:0007669"/>
    <property type="project" value="InterPro"/>
</dbReference>
<dbReference type="GO" id="GO:0050136">
    <property type="term" value="F:NADH:ubiquinone reductase (non-electrogenic) activity"/>
    <property type="evidence" value="ECO:0007669"/>
    <property type="project" value="UniProtKB-UniRule"/>
</dbReference>
<dbReference type="GO" id="GO:0048038">
    <property type="term" value="F:quinone binding"/>
    <property type="evidence" value="ECO:0007669"/>
    <property type="project" value="UniProtKB-KW"/>
</dbReference>
<dbReference type="GO" id="GO:0009060">
    <property type="term" value="P:aerobic respiration"/>
    <property type="evidence" value="ECO:0007669"/>
    <property type="project" value="TreeGrafter"/>
</dbReference>
<dbReference type="GO" id="GO:0015990">
    <property type="term" value="P:electron transport coupled proton transport"/>
    <property type="evidence" value="ECO:0007669"/>
    <property type="project" value="TreeGrafter"/>
</dbReference>
<dbReference type="FunFam" id="3.40.50.12280:FF:000001">
    <property type="entry name" value="NADH-quinone oxidoreductase subunit B 2"/>
    <property type="match status" value="1"/>
</dbReference>
<dbReference type="Gene3D" id="3.40.50.12280">
    <property type="match status" value="1"/>
</dbReference>
<dbReference type="HAMAP" id="MF_01356">
    <property type="entry name" value="NDH1_NuoB"/>
    <property type="match status" value="1"/>
</dbReference>
<dbReference type="InterPro" id="IPR006137">
    <property type="entry name" value="NADH_UbQ_OxRdtase-like_20kDa"/>
</dbReference>
<dbReference type="InterPro" id="IPR006138">
    <property type="entry name" value="NADH_UQ_OxRdtase_20Kd_su"/>
</dbReference>
<dbReference type="NCBIfam" id="TIGR01957">
    <property type="entry name" value="nuoB_fam"/>
    <property type="match status" value="1"/>
</dbReference>
<dbReference type="NCBIfam" id="NF005012">
    <property type="entry name" value="PRK06411.1"/>
    <property type="match status" value="1"/>
</dbReference>
<dbReference type="PANTHER" id="PTHR11995">
    <property type="entry name" value="NADH DEHYDROGENASE"/>
    <property type="match status" value="1"/>
</dbReference>
<dbReference type="PANTHER" id="PTHR11995:SF14">
    <property type="entry name" value="NADH DEHYDROGENASE [UBIQUINONE] IRON-SULFUR PROTEIN 7, MITOCHONDRIAL"/>
    <property type="match status" value="1"/>
</dbReference>
<dbReference type="Pfam" id="PF01058">
    <property type="entry name" value="Oxidored_q6"/>
    <property type="match status" value="1"/>
</dbReference>
<dbReference type="SUPFAM" id="SSF56770">
    <property type="entry name" value="HydA/Nqo6-like"/>
    <property type="match status" value="1"/>
</dbReference>
<dbReference type="PROSITE" id="PS01150">
    <property type="entry name" value="COMPLEX1_20K"/>
    <property type="match status" value="1"/>
</dbReference>
<name>NUOB_JANSC</name>
<comment type="function">
    <text evidence="1">NDH-1 shuttles electrons from NADH, via FMN and iron-sulfur (Fe-S) centers, to quinones in the respiratory chain. Couples the redox reaction to proton translocation (for every two electrons transferred, four hydrogen ions are translocated across the cytoplasmic membrane), and thus conserves the redox energy in a proton gradient (By similarity).</text>
</comment>
<comment type="catalytic activity">
    <reaction evidence="2">
        <text>a quinone + NADH + 5 H(+)(in) = a quinol + NAD(+) + 4 H(+)(out)</text>
        <dbReference type="Rhea" id="RHEA:57888"/>
        <dbReference type="ChEBI" id="CHEBI:15378"/>
        <dbReference type="ChEBI" id="CHEBI:24646"/>
        <dbReference type="ChEBI" id="CHEBI:57540"/>
        <dbReference type="ChEBI" id="CHEBI:57945"/>
        <dbReference type="ChEBI" id="CHEBI:132124"/>
    </reaction>
</comment>
<comment type="cofactor">
    <cofactor evidence="2">
        <name>[4Fe-4S] cluster</name>
        <dbReference type="ChEBI" id="CHEBI:49883"/>
    </cofactor>
    <text evidence="2">Binds 1 [4Fe-4S] cluster.</text>
</comment>
<comment type="subunit">
    <text evidence="2">NDH-1 is composed of 14 different subunits. Subunits NuoB, C, D, E, F, and G constitute the peripheral sector of the complex.</text>
</comment>
<comment type="subcellular location">
    <subcellularLocation>
        <location evidence="2">Cell inner membrane</location>
        <topology evidence="2">Peripheral membrane protein</topology>
        <orientation evidence="2">Cytoplasmic side</orientation>
    </subcellularLocation>
</comment>
<comment type="similarity">
    <text evidence="2">Belongs to the complex I 20 kDa subunit family.</text>
</comment>
<accession>Q28T75</accession>
<proteinExistence type="inferred from homology"/>